<comment type="catalytic activity">
    <reaction evidence="1">
        <text>tRNA(Lys) + L-lysine + ATP = L-lysyl-tRNA(Lys) + AMP + diphosphate</text>
        <dbReference type="Rhea" id="RHEA:20792"/>
        <dbReference type="Rhea" id="RHEA-COMP:9696"/>
        <dbReference type="Rhea" id="RHEA-COMP:9697"/>
        <dbReference type="ChEBI" id="CHEBI:30616"/>
        <dbReference type="ChEBI" id="CHEBI:32551"/>
        <dbReference type="ChEBI" id="CHEBI:33019"/>
        <dbReference type="ChEBI" id="CHEBI:78442"/>
        <dbReference type="ChEBI" id="CHEBI:78529"/>
        <dbReference type="ChEBI" id="CHEBI:456215"/>
        <dbReference type="EC" id="6.1.1.6"/>
    </reaction>
</comment>
<comment type="cofactor">
    <cofactor evidence="1">
        <name>Mg(2+)</name>
        <dbReference type="ChEBI" id="CHEBI:18420"/>
    </cofactor>
    <text evidence="1">Binds 3 Mg(2+) ions per subunit.</text>
</comment>
<comment type="subunit">
    <text evidence="1">Homodimer.</text>
</comment>
<comment type="subcellular location">
    <subcellularLocation>
        <location evidence="1">Cytoplasm</location>
    </subcellularLocation>
</comment>
<comment type="similarity">
    <text evidence="1">Belongs to the class-II aminoacyl-tRNA synthetase family.</text>
</comment>
<organism>
    <name type="scientific">Shewanella oneidensis (strain ATCC 700550 / JCM 31522 / CIP 106686 / LMG 19005 / NCIMB 14063 / MR-1)</name>
    <dbReference type="NCBI Taxonomy" id="211586"/>
    <lineage>
        <taxon>Bacteria</taxon>
        <taxon>Pseudomonadati</taxon>
        <taxon>Pseudomonadota</taxon>
        <taxon>Gammaproteobacteria</taxon>
        <taxon>Alteromonadales</taxon>
        <taxon>Shewanellaceae</taxon>
        <taxon>Shewanella</taxon>
    </lineage>
</organism>
<evidence type="ECO:0000255" key="1">
    <source>
        <dbReference type="HAMAP-Rule" id="MF_00252"/>
    </source>
</evidence>
<reference key="1">
    <citation type="journal article" date="2002" name="Nat. Biotechnol.">
        <title>Genome sequence of the dissimilatory metal ion-reducing bacterium Shewanella oneidensis.</title>
        <authorList>
            <person name="Heidelberg J.F."/>
            <person name="Paulsen I.T."/>
            <person name="Nelson K.E."/>
            <person name="Gaidos E.J."/>
            <person name="Nelson W.C."/>
            <person name="Read T.D."/>
            <person name="Eisen J.A."/>
            <person name="Seshadri R."/>
            <person name="Ward N.L."/>
            <person name="Methe B.A."/>
            <person name="Clayton R.A."/>
            <person name="Meyer T."/>
            <person name="Tsapin A."/>
            <person name="Scott J."/>
            <person name="Beanan M.J."/>
            <person name="Brinkac L.M."/>
            <person name="Daugherty S.C."/>
            <person name="DeBoy R.T."/>
            <person name="Dodson R.J."/>
            <person name="Durkin A.S."/>
            <person name="Haft D.H."/>
            <person name="Kolonay J.F."/>
            <person name="Madupu R."/>
            <person name="Peterson J.D."/>
            <person name="Umayam L.A."/>
            <person name="White O."/>
            <person name="Wolf A.M."/>
            <person name="Vamathevan J.J."/>
            <person name="Weidman J.F."/>
            <person name="Impraim M."/>
            <person name="Lee K."/>
            <person name="Berry K.J."/>
            <person name="Lee C."/>
            <person name="Mueller J."/>
            <person name="Khouri H.M."/>
            <person name="Gill J."/>
            <person name="Utterback T.R."/>
            <person name="McDonald L.A."/>
            <person name="Feldblyum T.V."/>
            <person name="Smith H.O."/>
            <person name="Venter J.C."/>
            <person name="Nealson K.H."/>
            <person name="Fraser C.M."/>
        </authorList>
    </citation>
    <scope>NUCLEOTIDE SEQUENCE [LARGE SCALE GENOMIC DNA]</scope>
    <source>
        <strain>ATCC 700550 / JCM 31522 / CIP 106686 / LMG 19005 / NCIMB 14063 / MR-1</strain>
    </source>
</reference>
<keyword id="KW-0030">Aminoacyl-tRNA synthetase</keyword>
<keyword id="KW-0067">ATP-binding</keyword>
<keyword id="KW-0963">Cytoplasm</keyword>
<keyword id="KW-0436">Ligase</keyword>
<keyword id="KW-0460">Magnesium</keyword>
<keyword id="KW-0479">Metal-binding</keyword>
<keyword id="KW-0547">Nucleotide-binding</keyword>
<keyword id="KW-0648">Protein biosynthesis</keyword>
<keyword id="KW-1185">Reference proteome</keyword>
<name>SYK_SHEON</name>
<feature type="chain" id="PRO_0000152673" description="Lysine--tRNA ligase">
    <location>
        <begin position="1"/>
        <end position="500"/>
    </location>
</feature>
<feature type="binding site" evidence="1">
    <location>
        <position position="410"/>
    </location>
    <ligand>
        <name>Mg(2+)</name>
        <dbReference type="ChEBI" id="CHEBI:18420"/>
        <label>1</label>
    </ligand>
</feature>
<feature type="binding site" evidence="1">
    <location>
        <position position="417"/>
    </location>
    <ligand>
        <name>Mg(2+)</name>
        <dbReference type="ChEBI" id="CHEBI:18420"/>
        <label>1</label>
    </ligand>
</feature>
<feature type="binding site" evidence="1">
    <location>
        <position position="417"/>
    </location>
    <ligand>
        <name>Mg(2+)</name>
        <dbReference type="ChEBI" id="CHEBI:18420"/>
        <label>2</label>
    </ligand>
</feature>
<gene>
    <name evidence="1" type="primary">lysS</name>
    <name type="ordered locus">SO_0992</name>
</gene>
<protein>
    <recommendedName>
        <fullName evidence="1">Lysine--tRNA ligase</fullName>
        <ecNumber evidence="1">6.1.1.6</ecNumber>
    </recommendedName>
    <alternativeName>
        <fullName evidence="1">Lysyl-tRNA synthetase</fullName>
        <shortName evidence="1">LysRS</shortName>
    </alternativeName>
</protein>
<accession>Q8EI58</accession>
<dbReference type="EC" id="6.1.1.6" evidence="1"/>
<dbReference type="EMBL" id="AE014299">
    <property type="protein sequence ID" value="AAN54065.1"/>
    <property type="molecule type" value="Genomic_DNA"/>
</dbReference>
<dbReference type="RefSeq" id="NP_716620.1">
    <property type="nucleotide sequence ID" value="NC_004347.2"/>
</dbReference>
<dbReference type="RefSeq" id="WP_011071261.1">
    <property type="nucleotide sequence ID" value="NC_004347.2"/>
</dbReference>
<dbReference type="SMR" id="Q8EI58"/>
<dbReference type="STRING" id="211586.SO_0992"/>
<dbReference type="PaxDb" id="211586-SO_0992"/>
<dbReference type="KEGG" id="son:SO_0992"/>
<dbReference type="PATRIC" id="fig|211586.12.peg.950"/>
<dbReference type="eggNOG" id="COG1190">
    <property type="taxonomic scope" value="Bacteria"/>
</dbReference>
<dbReference type="HOGENOM" id="CLU_008255_6_0_6"/>
<dbReference type="OrthoDB" id="9802326at2"/>
<dbReference type="PhylomeDB" id="Q8EI58"/>
<dbReference type="BioCyc" id="SONE211586:G1GMP-922-MONOMER"/>
<dbReference type="Proteomes" id="UP000008186">
    <property type="component" value="Chromosome"/>
</dbReference>
<dbReference type="GO" id="GO:0005737">
    <property type="term" value="C:cytoplasm"/>
    <property type="evidence" value="ECO:0000318"/>
    <property type="project" value="GO_Central"/>
</dbReference>
<dbReference type="GO" id="GO:0005829">
    <property type="term" value="C:cytosol"/>
    <property type="evidence" value="ECO:0000318"/>
    <property type="project" value="GO_Central"/>
</dbReference>
<dbReference type="GO" id="GO:0005524">
    <property type="term" value="F:ATP binding"/>
    <property type="evidence" value="ECO:0007669"/>
    <property type="project" value="UniProtKB-UniRule"/>
</dbReference>
<dbReference type="GO" id="GO:0004824">
    <property type="term" value="F:lysine-tRNA ligase activity"/>
    <property type="evidence" value="ECO:0000318"/>
    <property type="project" value="GO_Central"/>
</dbReference>
<dbReference type="GO" id="GO:0000287">
    <property type="term" value="F:magnesium ion binding"/>
    <property type="evidence" value="ECO:0007669"/>
    <property type="project" value="UniProtKB-UniRule"/>
</dbReference>
<dbReference type="GO" id="GO:0000049">
    <property type="term" value="F:tRNA binding"/>
    <property type="evidence" value="ECO:0000318"/>
    <property type="project" value="GO_Central"/>
</dbReference>
<dbReference type="GO" id="GO:0006430">
    <property type="term" value="P:lysyl-tRNA aminoacylation"/>
    <property type="evidence" value="ECO:0000318"/>
    <property type="project" value="GO_Central"/>
</dbReference>
<dbReference type="CDD" id="cd00775">
    <property type="entry name" value="LysRS_core"/>
    <property type="match status" value="1"/>
</dbReference>
<dbReference type="CDD" id="cd04322">
    <property type="entry name" value="LysRS_N"/>
    <property type="match status" value="1"/>
</dbReference>
<dbReference type="FunFam" id="2.40.50.140:FF:000024">
    <property type="entry name" value="Lysine--tRNA ligase"/>
    <property type="match status" value="1"/>
</dbReference>
<dbReference type="FunFam" id="3.30.930.10:FF:000001">
    <property type="entry name" value="Lysine--tRNA ligase"/>
    <property type="match status" value="1"/>
</dbReference>
<dbReference type="Gene3D" id="3.30.930.10">
    <property type="entry name" value="Bira Bifunctional Protein, Domain 2"/>
    <property type="match status" value="1"/>
</dbReference>
<dbReference type="Gene3D" id="2.40.50.140">
    <property type="entry name" value="Nucleic acid-binding proteins"/>
    <property type="match status" value="1"/>
</dbReference>
<dbReference type="HAMAP" id="MF_00252">
    <property type="entry name" value="Lys_tRNA_synth_class2"/>
    <property type="match status" value="1"/>
</dbReference>
<dbReference type="InterPro" id="IPR004364">
    <property type="entry name" value="Aa-tRNA-synt_II"/>
</dbReference>
<dbReference type="InterPro" id="IPR006195">
    <property type="entry name" value="aa-tRNA-synth_II"/>
</dbReference>
<dbReference type="InterPro" id="IPR045864">
    <property type="entry name" value="aa-tRNA-synth_II/BPL/LPL"/>
</dbReference>
<dbReference type="InterPro" id="IPR002313">
    <property type="entry name" value="Lys-tRNA-ligase_II"/>
</dbReference>
<dbReference type="InterPro" id="IPR044136">
    <property type="entry name" value="Lys-tRNA-ligase_II_N"/>
</dbReference>
<dbReference type="InterPro" id="IPR018149">
    <property type="entry name" value="Lys-tRNA-synth_II_C"/>
</dbReference>
<dbReference type="InterPro" id="IPR012340">
    <property type="entry name" value="NA-bd_OB-fold"/>
</dbReference>
<dbReference type="InterPro" id="IPR004365">
    <property type="entry name" value="NA-bd_OB_tRNA"/>
</dbReference>
<dbReference type="NCBIfam" id="TIGR00499">
    <property type="entry name" value="lysS_bact"/>
    <property type="match status" value="1"/>
</dbReference>
<dbReference type="NCBIfam" id="NF001756">
    <property type="entry name" value="PRK00484.1"/>
    <property type="match status" value="1"/>
</dbReference>
<dbReference type="PANTHER" id="PTHR42918:SF15">
    <property type="entry name" value="LYSINE--TRNA LIGASE, CHLOROPLASTIC_MITOCHONDRIAL"/>
    <property type="match status" value="1"/>
</dbReference>
<dbReference type="PANTHER" id="PTHR42918">
    <property type="entry name" value="LYSYL-TRNA SYNTHETASE"/>
    <property type="match status" value="1"/>
</dbReference>
<dbReference type="Pfam" id="PF00152">
    <property type="entry name" value="tRNA-synt_2"/>
    <property type="match status" value="1"/>
</dbReference>
<dbReference type="Pfam" id="PF01336">
    <property type="entry name" value="tRNA_anti-codon"/>
    <property type="match status" value="1"/>
</dbReference>
<dbReference type="PRINTS" id="PR00982">
    <property type="entry name" value="TRNASYNTHLYS"/>
</dbReference>
<dbReference type="SUPFAM" id="SSF55681">
    <property type="entry name" value="Class II aaRS and biotin synthetases"/>
    <property type="match status" value="1"/>
</dbReference>
<dbReference type="SUPFAM" id="SSF50249">
    <property type="entry name" value="Nucleic acid-binding proteins"/>
    <property type="match status" value="1"/>
</dbReference>
<dbReference type="PROSITE" id="PS50862">
    <property type="entry name" value="AA_TRNA_LIGASE_II"/>
    <property type="match status" value="1"/>
</dbReference>
<proteinExistence type="inferred from homology"/>
<sequence length="500" mass="57060">MTEQVQDENKLIAERRAKLDSIRPNCSANAHPNTFRRTHKAAELQEKYGQNTKEELEALGFRTSIAGRIMAKRGPFLVIQDVSGRIQAYAEKGVQADLKDRYQGLDIGDIIGVTGQLHLSGKGDLYVNMEEYQLLTKALRPLPEKFHGLTDQETRYRQRYVDLIVNEESRQAFVMRSKVVAAIRNFMIKKEFMEVETPMMHVIPGGASARPFITHHNALDMPMYLRIAPELYLKRLVVGGFERVFEINRNFRNEGLSPRHNPEFTMMEFYMAYADYQDLMDLTEELLSSIAIELLGSAQMPYGEHTVDFGGPYARLSMLEAIQKYNPDNATIQAMTYEQVKDLEFMRELAISLGIKIEKFWTCGQLLEEIFGETAEWQLMQPTFITGYPADISPLARRNDDNHFITDRFEFFIGGREVANGFSELNDAQDQDSRFKAQVDAKDAGDDEAMFYDADYITALEHGLPPTAGQGIGIDRLVMLFTNTHTIRDVILFPAMRPQA</sequence>